<sequence>MSTNPFDDDNGAFFVLVNDEDQHSLWPVFADIPAGWRVVHGEASRAACLDYVEKNWTDLRPKSLRDAMVED</sequence>
<comment type="function">
    <text evidence="1">Could be involved in mycobactin synthesis.</text>
</comment>
<evidence type="ECO:0000250" key="1"/>
<evidence type="ECO:0007829" key="2">
    <source>
        <dbReference type="PDB" id="2KHR"/>
    </source>
</evidence>
<organism>
    <name type="scientific">Mycobacterium tuberculosis (strain ATCC 25618 / H37Rv)</name>
    <dbReference type="NCBI Taxonomy" id="83332"/>
    <lineage>
        <taxon>Bacteria</taxon>
        <taxon>Bacillati</taxon>
        <taxon>Actinomycetota</taxon>
        <taxon>Actinomycetes</taxon>
        <taxon>Mycobacteriales</taxon>
        <taxon>Mycobacteriaceae</taxon>
        <taxon>Mycobacterium</taxon>
        <taxon>Mycobacterium tuberculosis complex</taxon>
    </lineage>
</organism>
<feature type="chain" id="PRO_0000096276" description="Protein MbtH">
    <location>
        <begin position="1"/>
        <end position="71"/>
    </location>
</feature>
<feature type="strand" evidence="2">
    <location>
        <begin position="13"/>
        <end position="18"/>
    </location>
</feature>
<feature type="strand" evidence="2">
    <location>
        <begin position="24"/>
        <end position="27"/>
    </location>
</feature>
<feature type="strand" evidence="2">
    <location>
        <begin position="34"/>
        <end position="40"/>
    </location>
</feature>
<feature type="helix" evidence="2">
    <location>
        <begin position="45"/>
        <end position="57"/>
    </location>
</feature>
<feature type="strand" evidence="2">
    <location>
        <begin position="64"/>
        <end position="68"/>
    </location>
</feature>
<name>MBTH_MYCTU</name>
<accession>P9WIP5</accession>
<accession>L0T9M5</accession>
<accession>O05821</accession>
<gene>
    <name type="primary">mbtH</name>
    <name type="ordered locus">Rv2377c</name>
    <name type="ORF">MTCY27.03</name>
</gene>
<dbReference type="EMBL" id="AL123456">
    <property type="protein sequence ID" value="CCP45165.1"/>
    <property type="molecule type" value="Genomic_DNA"/>
</dbReference>
<dbReference type="PIR" id="H70587">
    <property type="entry name" value="H70587"/>
</dbReference>
<dbReference type="RefSeq" id="NP_216893.1">
    <property type="nucleotide sequence ID" value="NC_000962.3"/>
</dbReference>
<dbReference type="RefSeq" id="WP_003916994.1">
    <property type="nucleotide sequence ID" value="NZ_NVQJ01000029.1"/>
</dbReference>
<dbReference type="PDB" id="2KHR">
    <property type="method" value="NMR"/>
    <property type="chains" value="A=1-71"/>
</dbReference>
<dbReference type="PDBsum" id="2KHR"/>
<dbReference type="BMRB" id="P9WIP5"/>
<dbReference type="SMR" id="P9WIP5"/>
<dbReference type="FunCoup" id="P9WIP5">
    <property type="interactions" value="1"/>
</dbReference>
<dbReference type="STRING" id="83332.Rv2377c"/>
<dbReference type="PaxDb" id="83332-Rv2377c"/>
<dbReference type="DNASU" id="885968"/>
<dbReference type="GeneID" id="885968"/>
<dbReference type="KEGG" id="mtu:Rv2377c"/>
<dbReference type="KEGG" id="mtv:RVBD_2377c"/>
<dbReference type="TubercuList" id="Rv2377c"/>
<dbReference type="eggNOG" id="COG3251">
    <property type="taxonomic scope" value="Bacteria"/>
</dbReference>
<dbReference type="InParanoid" id="P9WIP5"/>
<dbReference type="OrthoDB" id="7584480at2"/>
<dbReference type="PhylomeDB" id="P9WIP5"/>
<dbReference type="BioCyc" id="MetaCyc:G185E-6603-MONOMER"/>
<dbReference type="EvolutionaryTrace" id="P9WIP5"/>
<dbReference type="Proteomes" id="UP000001584">
    <property type="component" value="Chromosome"/>
</dbReference>
<dbReference type="GO" id="GO:0005829">
    <property type="term" value="C:cytosol"/>
    <property type="evidence" value="ECO:0000318"/>
    <property type="project" value="GO_Central"/>
</dbReference>
<dbReference type="GO" id="GO:0019290">
    <property type="term" value="P:siderophore biosynthetic process"/>
    <property type="evidence" value="ECO:0000318"/>
    <property type="project" value="GO_Central"/>
</dbReference>
<dbReference type="DisProt" id="DP01509"/>
<dbReference type="FunFam" id="3.90.820.10:FF:000002">
    <property type="entry name" value="MbtH family protein"/>
    <property type="match status" value="1"/>
</dbReference>
<dbReference type="Gene3D" id="3.90.820.10">
    <property type="entry name" value="Structural Genomics, Unknown Function 30-nov-00 1gh9 Mol_id"/>
    <property type="match status" value="1"/>
</dbReference>
<dbReference type="InterPro" id="IPR005153">
    <property type="entry name" value="MbtH-like_dom"/>
</dbReference>
<dbReference type="InterPro" id="IPR038020">
    <property type="entry name" value="MbtH-like_sf"/>
</dbReference>
<dbReference type="InterPro" id="IPR037407">
    <property type="entry name" value="MLP_fam"/>
</dbReference>
<dbReference type="PANTHER" id="PTHR38444">
    <property type="entry name" value="ENTEROBACTIN BIOSYNTHESIS PROTEIN YBDZ"/>
    <property type="match status" value="1"/>
</dbReference>
<dbReference type="PANTHER" id="PTHR38444:SF1">
    <property type="entry name" value="ENTEROBACTIN BIOSYNTHESIS PROTEIN YBDZ"/>
    <property type="match status" value="1"/>
</dbReference>
<dbReference type="Pfam" id="PF03621">
    <property type="entry name" value="MbtH"/>
    <property type="match status" value="1"/>
</dbReference>
<dbReference type="SMART" id="SM00923">
    <property type="entry name" value="MbtH"/>
    <property type="match status" value="1"/>
</dbReference>
<dbReference type="SUPFAM" id="SSF160582">
    <property type="entry name" value="MbtH-like"/>
    <property type="match status" value="1"/>
</dbReference>
<protein>
    <recommendedName>
        <fullName>Protein MbtH</fullName>
    </recommendedName>
</protein>
<proteinExistence type="evidence at protein level"/>
<keyword id="KW-0002">3D-structure</keyword>
<keyword id="KW-1185">Reference proteome</keyword>
<reference key="1">
    <citation type="journal article" date="1998" name="Nature">
        <title>Deciphering the biology of Mycobacterium tuberculosis from the complete genome sequence.</title>
        <authorList>
            <person name="Cole S.T."/>
            <person name="Brosch R."/>
            <person name="Parkhill J."/>
            <person name="Garnier T."/>
            <person name="Churcher C.M."/>
            <person name="Harris D.E."/>
            <person name="Gordon S.V."/>
            <person name="Eiglmeier K."/>
            <person name="Gas S."/>
            <person name="Barry C.E. III"/>
            <person name="Tekaia F."/>
            <person name="Badcock K."/>
            <person name="Basham D."/>
            <person name="Brown D."/>
            <person name="Chillingworth T."/>
            <person name="Connor R."/>
            <person name="Davies R.M."/>
            <person name="Devlin K."/>
            <person name="Feltwell T."/>
            <person name="Gentles S."/>
            <person name="Hamlin N."/>
            <person name="Holroyd S."/>
            <person name="Hornsby T."/>
            <person name="Jagels K."/>
            <person name="Krogh A."/>
            <person name="McLean J."/>
            <person name="Moule S."/>
            <person name="Murphy L.D."/>
            <person name="Oliver S."/>
            <person name="Osborne J."/>
            <person name="Quail M.A."/>
            <person name="Rajandream M.A."/>
            <person name="Rogers J."/>
            <person name="Rutter S."/>
            <person name="Seeger K."/>
            <person name="Skelton S."/>
            <person name="Squares S."/>
            <person name="Squares R."/>
            <person name="Sulston J.E."/>
            <person name="Taylor K."/>
            <person name="Whitehead S."/>
            <person name="Barrell B.G."/>
        </authorList>
    </citation>
    <scope>NUCLEOTIDE SEQUENCE [LARGE SCALE GENOMIC DNA]</scope>
    <source>
        <strain>ATCC 25618 / H37Rv</strain>
    </source>
</reference>
<reference key="2">
    <citation type="journal article" date="2011" name="Mol. Cell. Proteomics">
        <title>Proteogenomic analysis of Mycobacterium tuberculosis by high resolution mass spectrometry.</title>
        <authorList>
            <person name="Kelkar D.S."/>
            <person name="Kumar D."/>
            <person name="Kumar P."/>
            <person name="Balakrishnan L."/>
            <person name="Muthusamy B."/>
            <person name="Yadav A.K."/>
            <person name="Shrivastava P."/>
            <person name="Marimuthu A."/>
            <person name="Anand S."/>
            <person name="Sundaram H."/>
            <person name="Kingsbury R."/>
            <person name="Harsha H.C."/>
            <person name="Nair B."/>
            <person name="Prasad T.S."/>
            <person name="Chauhan D.S."/>
            <person name="Katoch K."/>
            <person name="Katoch V.M."/>
            <person name="Kumar P."/>
            <person name="Chaerkady R."/>
            <person name="Ramachandran S."/>
            <person name="Dash D."/>
            <person name="Pandey A."/>
        </authorList>
    </citation>
    <scope>IDENTIFICATION BY MASS SPECTROMETRY [LARGE SCALE ANALYSIS]</scope>
    <source>
        <strain>ATCC 25618 / H37Rv</strain>
    </source>
</reference>